<sequence length="98" mass="10924">MSMVYFNIFMAFTVSFVGLLMYRSHLMSSLLCLEGMMLSLFVMMSMTILNNHFTLASMAPIILLVFAACEAALGLSLLVMVSNTYGTDYVQNLNLLQC</sequence>
<comment type="function">
    <text evidence="1">Core subunit of the mitochondrial membrane respiratory chain NADH dehydrogenase (Complex I) which catalyzes electron transfer from NADH through the respiratory chain, using ubiquinone as an electron acceptor. Part of the enzyme membrane arm which is embedded in the lipid bilayer and involved in proton translocation.</text>
</comment>
<comment type="catalytic activity">
    <reaction evidence="1">
        <text>a ubiquinone + NADH + 5 H(+)(in) = a ubiquinol + NAD(+) + 4 H(+)(out)</text>
        <dbReference type="Rhea" id="RHEA:29091"/>
        <dbReference type="Rhea" id="RHEA-COMP:9565"/>
        <dbReference type="Rhea" id="RHEA-COMP:9566"/>
        <dbReference type="ChEBI" id="CHEBI:15378"/>
        <dbReference type="ChEBI" id="CHEBI:16389"/>
        <dbReference type="ChEBI" id="CHEBI:17976"/>
        <dbReference type="ChEBI" id="CHEBI:57540"/>
        <dbReference type="ChEBI" id="CHEBI:57945"/>
        <dbReference type="EC" id="7.1.1.2"/>
    </reaction>
    <physiologicalReaction direction="left-to-right" evidence="1">
        <dbReference type="Rhea" id="RHEA:29092"/>
    </physiologicalReaction>
</comment>
<comment type="subunit">
    <text evidence="2">Core subunit of respiratory chain NADH dehydrogenase (Complex I) which is composed of 45 different subunits.</text>
</comment>
<comment type="subcellular location">
    <subcellularLocation>
        <location evidence="2">Mitochondrion inner membrane</location>
        <topology evidence="3">Multi-pass membrane protein</topology>
    </subcellularLocation>
</comment>
<comment type="similarity">
    <text evidence="4">Belongs to the complex I subunit 4L family.</text>
</comment>
<keyword id="KW-0249">Electron transport</keyword>
<keyword id="KW-0472">Membrane</keyword>
<keyword id="KW-0496">Mitochondrion</keyword>
<keyword id="KW-0999">Mitochondrion inner membrane</keyword>
<keyword id="KW-0520">NAD</keyword>
<keyword id="KW-0679">Respiratory chain</keyword>
<keyword id="KW-1278">Translocase</keyword>
<keyword id="KW-0812">Transmembrane</keyword>
<keyword id="KW-1133">Transmembrane helix</keyword>
<keyword id="KW-0813">Transport</keyword>
<keyword id="KW-0830">Ubiquinone</keyword>
<reference key="1">
    <citation type="journal article" date="2004" name="Mol. Phylogenet. Evol.">
        <title>A phylogeny of the extant Phocidae inferred from complete mitochondrial DNA coding regions.</title>
        <authorList>
            <person name="Davis C.S."/>
            <person name="Delisle I."/>
            <person name="Stirling I."/>
            <person name="Siniff D.B."/>
            <person name="Strobeck C."/>
        </authorList>
    </citation>
    <scope>NUCLEOTIDE SEQUENCE [GENOMIC DNA]</scope>
</reference>
<protein>
    <recommendedName>
        <fullName>NADH-ubiquinone oxidoreductase chain 4L</fullName>
        <ecNumber>7.1.1.2</ecNumber>
    </recommendedName>
    <alternativeName>
        <fullName>NADH dehydrogenase subunit 4L</fullName>
    </alternativeName>
</protein>
<dbReference type="EC" id="7.1.1.2"/>
<dbReference type="EMBL" id="AY377242">
    <property type="protein sequence ID" value="AAQ93781.1"/>
    <property type="molecule type" value="Genomic_DNA"/>
</dbReference>
<dbReference type="SMR" id="Q679A2"/>
<dbReference type="GO" id="GO:0005743">
    <property type="term" value="C:mitochondrial inner membrane"/>
    <property type="evidence" value="ECO:0000250"/>
    <property type="project" value="UniProtKB"/>
</dbReference>
<dbReference type="GO" id="GO:0045271">
    <property type="term" value="C:respiratory chain complex I"/>
    <property type="evidence" value="ECO:0000250"/>
    <property type="project" value="UniProtKB"/>
</dbReference>
<dbReference type="GO" id="GO:0008137">
    <property type="term" value="F:NADH dehydrogenase (ubiquinone) activity"/>
    <property type="evidence" value="ECO:0000250"/>
    <property type="project" value="UniProtKB"/>
</dbReference>
<dbReference type="GO" id="GO:0042773">
    <property type="term" value="P:ATP synthesis coupled electron transport"/>
    <property type="evidence" value="ECO:0007669"/>
    <property type="project" value="InterPro"/>
</dbReference>
<dbReference type="FunFam" id="1.10.287.3510:FF:000002">
    <property type="entry name" value="NADH-ubiquinone oxidoreductase chain 4L"/>
    <property type="match status" value="1"/>
</dbReference>
<dbReference type="Gene3D" id="1.10.287.3510">
    <property type="match status" value="1"/>
</dbReference>
<dbReference type="InterPro" id="IPR001133">
    <property type="entry name" value="NADH_UbQ_OxRdtase_chain4L/K"/>
</dbReference>
<dbReference type="InterPro" id="IPR039428">
    <property type="entry name" value="NUOK/Mnh_C1-like"/>
</dbReference>
<dbReference type="PANTHER" id="PTHR11434:SF0">
    <property type="entry name" value="NADH-UBIQUINONE OXIDOREDUCTASE CHAIN 4L"/>
    <property type="match status" value="1"/>
</dbReference>
<dbReference type="PANTHER" id="PTHR11434">
    <property type="entry name" value="NADH-UBIQUINONE OXIDOREDUCTASE SUBUNIT ND4L"/>
    <property type="match status" value="1"/>
</dbReference>
<dbReference type="Pfam" id="PF00420">
    <property type="entry name" value="Oxidored_q2"/>
    <property type="match status" value="1"/>
</dbReference>
<organism>
    <name type="scientific">Arctocephalus australis</name>
    <name type="common">South American fur seal</name>
    <name type="synonym">Phoca australis</name>
    <dbReference type="NCBI Taxonomy" id="161928"/>
    <lineage>
        <taxon>Eukaryota</taxon>
        <taxon>Metazoa</taxon>
        <taxon>Chordata</taxon>
        <taxon>Craniata</taxon>
        <taxon>Vertebrata</taxon>
        <taxon>Euteleostomi</taxon>
        <taxon>Mammalia</taxon>
        <taxon>Eutheria</taxon>
        <taxon>Laurasiatheria</taxon>
        <taxon>Carnivora</taxon>
        <taxon>Caniformia</taxon>
        <taxon>Pinnipedia</taxon>
        <taxon>Otariidae</taxon>
        <taxon>Arctocephalus</taxon>
    </lineage>
</organism>
<name>NU4LM_ARCAU</name>
<geneLocation type="mitochondrion"/>
<proteinExistence type="inferred from homology"/>
<evidence type="ECO:0000250" key="1">
    <source>
        <dbReference type="UniProtKB" id="P03901"/>
    </source>
</evidence>
<evidence type="ECO:0000250" key="2">
    <source>
        <dbReference type="UniProtKB" id="P03902"/>
    </source>
</evidence>
<evidence type="ECO:0000255" key="3"/>
<evidence type="ECO:0000305" key="4"/>
<gene>
    <name type="primary">MT-ND4L</name>
    <name type="synonym">MTND4L</name>
    <name type="synonym">NADH4L</name>
    <name type="synonym">ND4L</name>
</gene>
<accession>Q679A2</accession>
<feature type="chain" id="PRO_0000274971" description="NADH-ubiquinone oxidoreductase chain 4L">
    <location>
        <begin position="1"/>
        <end position="98"/>
    </location>
</feature>
<feature type="transmembrane region" description="Helical" evidence="3">
    <location>
        <begin position="1"/>
        <end position="21"/>
    </location>
</feature>
<feature type="transmembrane region" description="Helical" evidence="3">
    <location>
        <begin position="29"/>
        <end position="49"/>
    </location>
</feature>
<feature type="transmembrane region" description="Helical" evidence="3">
    <location>
        <begin position="61"/>
        <end position="81"/>
    </location>
</feature>